<comment type="similarity">
    <text evidence="1">Belongs to the UPF0597 family.</text>
</comment>
<accession>A5EWR5</accession>
<evidence type="ECO:0000255" key="1">
    <source>
        <dbReference type="HAMAP-Rule" id="MF_01845"/>
    </source>
</evidence>
<reference key="1">
    <citation type="journal article" date="2007" name="Nat. Biotechnol.">
        <title>Genome sequence and identification of candidate vaccine antigens from the animal pathogen Dichelobacter nodosus.</title>
        <authorList>
            <person name="Myers G.S.A."/>
            <person name="Parker D."/>
            <person name="Al-Hasani K."/>
            <person name="Kennan R.M."/>
            <person name="Seemann T."/>
            <person name="Ren Q."/>
            <person name="Badger J.H."/>
            <person name="Selengut J.D."/>
            <person name="Deboy R.T."/>
            <person name="Tettelin H."/>
            <person name="Boyce J.D."/>
            <person name="McCarl V.P."/>
            <person name="Han X."/>
            <person name="Nelson W.C."/>
            <person name="Madupu R."/>
            <person name="Mohamoud Y."/>
            <person name="Holley T."/>
            <person name="Fedorova N."/>
            <person name="Khouri H."/>
            <person name="Bottomley S.P."/>
            <person name="Whittington R.J."/>
            <person name="Adler B."/>
            <person name="Songer J.G."/>
            <person name="Rood J.I."/>
            <person name="Paulsen I.T."/>
        </authorList>
    </citation>
    <scope>NUCLEOTIDE SEQUENCE [LARGE SCALE GENOMIC DNA]</scope>
    <source>
        <strain>VCS1703A</strain>
    </source>
</reference>
<dbReference type="EMBL" id="CP000513">
    <property type="protein sequence ID" value="ABQ14088.1"/>
    <property type="molecule type" value="Genomic_DNA"/>
</dbReference>
<dbReference type="RefSeq" id="WP_011927857.1">
    <property type="nucleotide sequence ID" value="NC_009446.1"/>
</dbReference>
<dbReference type="STRING" id="246195.DNO_0106"/>
<dbReference type="KEGG" id="dno:DNO_0106"/>
<dbReference type="eggNOG" id="COG3681">
    <property type="taxonomic scope" value="Bacteria"/>
</dbReference>
<dbReference type="HOGENOM" id="CLU_051840_0_0_6"/>
<dbReference type="OrthoDB" id="41906at2"/>
<dbReference type="Proteomes" id="UP000000248">
    <property type="component" value="Chromosome"/>
</dbReference>
<dbReference type="GO" id="GO:0080146">
    <property type="term" value="F:L-cysteine desulfhydrase activity"/>
    <property type="evidence" value="ECO:0007669"/>
    <property type="project" value="TreeGrafter"/>
</dbReference>
<dbReference type="GO" id="GO:0019450">
    <property type="term" value="P:L-cysteine catabolic process to pyruvate"/>
    <property type="evidence" value="ECO:0007669"/>
    <property type="project" value="TreeGrafter"/>
</dbReference>
<dbReference type="HAMAP" id="MF_01845">
    <property type="entry name" value="UPF0597"/>
    <property type="match status" value="1"/>
</dbReference>
<dbReference type="InterPro" id="IPR005130">
    <property type="entry name" value="Ser_deHydtase-like_asu"/>
</dbReference>
<dbReference type="InterPro" id="IPR021144">
    <property type="entry name" value="UPF0597"/>
</dbReference>
<dbReference type="PANTHER" id="PTHR30501">
    <property type="entry name" value="UPF0597 PROTEIN YHAM"/>
    <property type="match status" value="1"/>
</dbReference>
<dbReference type="PANTHER" id="PTHR30501:SF2">
    <property type="entry name" value="UPF0597 PROTEIN YHAM"/>
    <property type="match status" value="1"/>
</dbReference>
<dbReference type="Pfam" id="PF03313">
    <property type="entry name" value="SDH_alpha"/>
    <property type="match status" value="1"/>
</dbReference>
<dbReference type="PIRSF" id="PIRSF006054">
    <property type="entry name" value="UCP006054"/>
    <property type="match status" value="1"/>
</dbReference>
<keyword id="KW-1185">Reference proteome</keyword>
<proteinExistence type="inferred from homology"/>
<organism>
    <name type="scientific">Dichelobacter nodosus (strain VCS1703A)</name>
    <dbReference type="NCBI Taxonomy" id="246195"/>
    <lineage>
        <taxon>Bacteria</taxon>
        <taxon>Pseudomonadati</taxon>
        <taxon>Pseudomonadota</taxon>
        <taxon>Gammaproteobacteria</taxon>
        <taxon>Cardiobacteriales</taxon>
        <taxon>Cardiobacteriaceae</taxon>
        <taxon>Dichelobacter</taxon>
    </lineage>
</organism>
<name>Y106_DICNV</name>
<sequence>MNTSLQDLEQEILAAVRHEVVPALGCTEPICVALAAAIGRTHLSSAPEKIAVRVSGNLMKNAMGVTVPGTGMVGLSIAAAVGAIGGDAEAGLQTLKSISAEDVAAAKKMLADDAVSVSMADTDHIFYAEVTLTAGAEIARVCIADTHTNVVLIEKNGKTIYQKPVAAADEKNPVAVFTKITAKDVFDFATTVDLEKIRFIKEAATLNSALSQEGLRTDYGLHIGRSLQKNIGNGLLSDDLLNRIIIETGAASDARMGGASLPAMSNSGSGNQGIAATMPVVVVARHLKSSEEKTIRALFLSHALAIYIHAKLPTLSSLCAANTAAMGSAGACAWLFSERFEAVSDTICSMIGDVSGMICDGAANSCAMKVISSITSGYKSMLMALDNTRVTGFEGIVEHDLERSINNLCALARESMQHVDQQIIDIMVQKPMH</sequence>
<gene>
    <name type="ordered locus">DNO_0106</name>
</gene>
<protein>
    <recommendedName>
        <fullName evidence="1">UPF0597 protein DNO_0106</fullName>
    </recommendedName>
</protein>
<feature type="chain" id="PRO_0000339816" description="UPF0597 protein DNO_0106">
    <location>
        <begin position="1"/>
        <end position="433"/>
    </location>
</feature>